<protein>
    <recommendedName>
        <fullName evidence="1">Ribosome maturation factor RimP</fullName>
    </recommendedName>
</protein>
<dbReference type="EMBL" id="CP001020">
    <property type="protein sequence ID" value="ACJ19869.1"/>
    <property type="molecule type" value="Genomic_DNA"/>
</dbReference>
<dbReference type="RefSeq" id="WP_005769046.1">
    <property type="nucleotide sequence ID" value="NC_011528.1"/>
</dbReference>
<dbReference type="SMR" id="B6J6A9"/>
<dbReference type="KEGG" id="cbc:CbuK_0601"/>
<dbReference type="HOGENOM" id="CLU_070525_1_1_6"/>
<dbReference type="GO" id="GO:0005829">
    <property type="term" value="C:cytosol"/>
    <property type="evidence" value="ECO:0007669"/>
    <property type="project" value="TreeGrafter"/>
</dbReference>
<dbReference type="GO" id="GO:0000028">
    <property type="term" value="P:ribosomal small subunit assembly"/>
    <property type="evidence" value="ECO:0007669"/>
    <property type="project" value="TreeGrafter"/>
</dbReference>
<dbReference type="GO" id="GO:0006412">
    <property type="term" value="P:translation"/>
    <property type="evidence" value="ECO:0007669"/>
    <property type="project" value="TreeGrafter"/>
</dbReference>
<dbReference type="CDD" id="cd01734">
    <property type="entry name" value="YlxS_C"/>
    <property type="match status" value="1"/>
</dbReference>
<dbReference type="FunFam" id="3.30.300.70:FF:000001">
    <property type="entry name" value="Ribosome maturation factor RimP"/>
    <property type="match status" value="1"/>
</dbReference>
<dbReference type="Gene3D" id="2.30.30.180">
    <property type="entry name" value="Ribosome maturation factor RimP, C-terminal domain"/>
    <property type="match status" value="1"/>
</dbReference>
<dbReference type="Gene3D" id="3.30.300.70">
    <property type="entry name" value="RimP-like superfamily, N-terminal"/>
    <property type="match status" value="1"/>
</dbReference>
<dbReference type="HAMAP" id="MF_01077">
    <property type="entry name" value="RimP"/>
    <property type="match status" value="1"/>
</dbReference>
<dbReference type="InterPro" id="IPR003728">
    <property type="entry name" value="Ribosome_maturation_RimP"/>
</dbReference>
<dbReference type="InterPro" id="IPR028998">
    <property type="entry name" value="RimP_C"/>
</dbReference>
<dbReference type="InterPro" id="IPR036847">
    <property type="entry name" value="RimP_C_sf"/>
</dbReference>
<dbReference type="InterPro" id="IPR028989">
    <property type="entry name" value="RimP_N"/>
</dbReference>
<dbReference type="InterPro" id="IPR035956">
    <property type="entry name" value="RimP_N_sf"/>
</dbReference>
<dbReference type="NCBIfam" id="NF000927">
    <property type="entry name" value="PRK00092.1-1"/>
    <property type="match status" value="1"/>
</dbReference>
<dbReference type="PANTHER" id="PTHR33867">
    <property type="entry name" value="RIBOSOME MATURATION FACTOR RIMP"/>
    <property type="match status" value="1"/>
</dbReference>
<dbReference type="PANTHER" id="PTHR33867:SF1">
    <property type="entry name" value="RIBOSOME MATURATION FACTOR RIMP"/>
    <property type="match status" value="1"/>
</dbReference>
<dbReference type="Pfam" id="PF17384">
    <property type="entry name" value="DUF150_C"/>
    <property type="match status" value="1"/>
</dbReference>
<dbReference type="Pfam" id="PF02576">
    <property type="entry name" value="RimP_N"/>
    <property type="match status" value="1"/>
</dbReference>
<dbReference type="SUPFAM" id="SSF74942">
    <property type="entry name" value="YhbC-like, C-terminal domain"/>
    <property type="match status" value="1"/>
</dbReference>
<dbReference type="SUPFAM" id="SSF75420">
    <property type="entry name" value="YhbC-like, N-terminal domain"/>
    <property type="match status" value="1"/>
</dbReference>
<name>RIMP_COXB1</name>
<evidence type="ECO:0000255" key="1">
    <source>
        <dbReference type="HAMAP-Rule" id="MF_01077"/>
    </source>
</evidence>
<feature type="chain" id="PRO_1000136752" description="Ribosome maturation factor RimP">
    <location>
        <begin position="1"/>
        <end position="153"/>
    </location>
</feature>
<proteinExistence type="inferred from homology"/>
<comment type="function">
    <text evidence="1">Required for maturation of 30S ribosomal subunits.</text>
</comment>
<comment type="subcellular location">
    <subcellularLocation>
        <location evidence="1">Cytoplasm</location>
    </subcellularLocation>
</comment>
<comment type="similarity">
    <text evidence="1">Belongs to the RimP family.</text>
</comment>
<gene>
    <name evidence="1" type="primary">rimP</name>
    <name type="ordered locus">CbuK_0601</name>
</gene>
<sequence length="153" mass="17129">MSQARTLHRLIAPAVEALGFELVGCELFRRGATTILQVFVDKPGGIGLDECAKVSRQISAVLDVEDPIRGRYTLEVSSPGLERPLYTANHYRRFIGNKAKIRLREPREGQRQFRGMIVAVDNEEQVTLQLDNKILKVPLGEIEKANLIADFEG</sequence>
<reference key="1">
    <citation type="journal article" date="2009" name="Infect. Immun.">
        <title>Comparative genomics reveal extensive transposon-mediated genomic plasticity and diversity among potential effector proteins within the genus Coxiella.</title>
        <authorList>
            <person name="Beare P.A."/>
            <person name="Unsworth N."/>
            <person name="Andoh M."/>
            <person name="Voth D.E."/>
            <person name="Omsland A."/>
            <person name="Gilk S.D."/>
            <person name="Williams K.P."/>
            <person name="Sobral B.W."/>
            <person name="Kupko J.J. III"/>
            <person name="Porcella S.F."/>
            <person name="Samuel J.E."/>
            <person name="Heinzen R.A."/>
        </authorList>
    </citation>
    <scope>NUCLEOTIDE SEQUENCE [LARGE SCALE GENOMIC DNA]</scope>
    <source>
        <strain>CbuK_Q154</strain>
    </source>
</reference>
<organism>
    <name type="scientific">Coxiella burnetii (strain CbuK_Q154)</name>
    <name type="common">Coxiella burnetii (strain Q154)</name>
    <dbReference type="NCBI Taxonomy" id="434924"/>
    <lineage>
        <taxon>Bacteria</taxon>
        <taxon>Pseudomonadati</taxon>
        <taxon>Pseudomonadota</taxon>
        <taxon>Gammaproteobacteria</taxon>
        <taxon>Legionellales</taxon>
        <taxon>Coxiellaceae</taxon>
        <taxon>Coxiella</taxon>
    </lineage>
</organism>
<accession>B6J6A9</accession>
<keyword id="KW-0963">Cytoplasm</keyword>
<keyword id="KW-0690">Ribosome biogenesis</keyword>